<accession>O74954</accession>
<evidence type="ECO:0000256" key="1">
    <source>
        <dbReference type="SAM" id="MobiDB-lite"/>
    </source>
</evidence>
<evidence type="ECO:0000269" key="2">
    <source>
    </source>
</evidence>
<evidence type="ECO:0000305" key="3"/>
<sequence>MGDYFAWDFANISGSNTSGSLNLNQLNLDNINNGLHNQEDGAGGRNENSERVGSGSPGSVSMQVLSLFSAVNSALATLEKSEEFPSVVKDEQSIFPAVAKASNSLDELAQNIIPAPSPPGFNRKRKTFDEDSSVEMIRRAISDHLDLLNNCCIGIANLNEDSVHKISLTRSGKPSQLVTVSCRHSSVIQKSYGSEKRYLCPPPMVYINGNYSSIFNQSFRTEISIMNDFGQCSQPISEEYTGQGCMIFRSLHISSLVAAKSKNLRLSLDMFSNVNNQLLSHLVTSSISIVSKPSKKGSKLKISNITLRSGSVVSLYNRINSQTVRTKYTSIEAGQFCLRGDRWVPLRINLLLPDENGKLKVCDDVDNPEPIKYGSIVELVDEATGTTSDPLIIRRVEKDHIAEEDGYVNQMHRIVLESAYPISNVRHLKIAEHSSLAYSNNISVRWFLGATSAQNRNASSEAILPIEWEAVGNLSSNEMTRVGDSVCWTIVGISHFDCTMMLPFNQNPVPTVTDYPYIEEPPEYLESSRSLQFKIGGYSVGLQIWLGVHGPLSYSFTAAADTSTMGTVTLGLSQISYDPSCAEQKYPLLFVIPGGIVIIGKCEILLTSSAFGN</sequence>
<keyword id="KW-0130">Cell adhesion</keyword>
<keyword id="KW-0963">Cytoplasm</keyword>
<keyword id="KW-0238">DNA-binding</keyword>
<keyword id="KW-0539">Nucleus</keyword>
<keyword id="KW-1185">Reference proteome</keyword>
<keyword id="KW-0804">Transcription</keyword>
<keyword id="KW-0805">Transcription regulation</keyword>
<feature type="chain" id="PRO_0000363405" description="Transcription factor cbf11">
    <location>
        <begin position="1"/>
        <end position="613"/>
    </location>
</feature>
<feature type="region of interest" description="Disordered" evidence="1">
    <location>
        <begin position="32"/>
        <end position="58"/>
    </location>
</feature>
<dbReference type="EMBL" id="CU329672">
    <property type="protein sequence ID" value="CAA19272.1"/>
    <property type="molecule type" value="Genomic_DNA"/>
</dbReference>
<dbReference type="PIR" id="T41565">
    <property type="entry name" value="T41565"/>
</dbReference>
<dbReference type="RefSeq" id="NP_587779.1">
    <property type="nucleotide sequence ID" value="NM_001022772.2"/>
</dbReference>
<dbReference type="SMR" id="O74954"/>
<dbReference type="BioGRID" id="276121">
    <property type="interactions" value="308"/>
</dbReference>
<dbReference type="FunCoup" id="O74954">
    <property type="interactions" value="224"/>
</dbReference>
<dbReference type="STRING" id="284812.O74954"/>
<dbReference type="iPTMnet" id="O74954"/>
<dbReference type="PaxDb" id="4896-SPCC736.08.1"/>
<dbReference type="EnsemblFungi" id="SPCC736.08.1">
    <property type="protein sequence ID" value="SPCC736.08.1:pep"/>
    <property type="gene ID" value="SPCC736.08"/>
</dbReference>
<dbReference type="GeneID" id="2539560"/>
<dbReference type="KEGG" id="spo:2539560"/>
<dbReference type="PomBase" id="SPCC736.08">
    <property type="gene designation" value="cbf11"/>
</dbReference>
<dbReference type="VEuPathDB" id="FungiDB:SPCC736.08"/>
<dbReference type="eggNOG" id="KOG3743">
    <property type="taxonomic scope" value="Eukaryota"/>
</dbReference>
<dbReference type="HOGENOM" id="CLU_455048_0_0_1"/>
<dbReference type="InParanoid" id="O74954"/>
<dbReference type="OMA" id="SHIITEQ"/>
<dbReference type="PhylomeDB" id="O74954"/>
<dbReference type="PRO" id="PR:O74954"/>
<dbReference type="Proteomes" id="UP000002485">
    <property type="component" value="Chromosome III"/>
</dbReference>
<dbReference type="GO" id="GO:0000785">
    <property type="term" value="C:chromatin"/>
    <property type="evidence" value="ECO:0000314"/>
    <property type="project" value="PomBase"/>
</dbReference>
<dbReference type="GO" id="GO:0005829">
    <property type="term" value="C:cytosol"/>
    <property type="evidence" value="ECO:0007005"/>
    <property type="project" value="PomBase"/>
</dbReference>
<dbReference type="GO" id="GO:0005634">
    <property type="term" value="C:nucleus"/>
    <property type="evidence" value="ECO:0000314"/>
    <property type="project" value="PomBase"/>
</dbReference>
<dbReference type="GO" id="GO:0001228">
    <property type="term" value="F:DNA-binding transcription activator activity, RNA polymerase II-specific"/>
    <property type="evidence" value="ECO:0000315"/>
    <property type="project" value="PomBase"/>
</dbReference>
<dbReference type="GO" id="GO:0003700">
    <property type="term" value="F:DNA-binding transcription factor activity"/>
    <property type="evidence" value="ECO:0000315"/>
    <property type="project" value="CACAO"/>
</dbReference>
<dbReference type="GO" id="GO:0000981">
    <property type="term" value="F:DNA-binding transcription factor activity, RNA polymerase II-specific"/>
    <property type="evidence" value="ECO:0000318"/>
    <property type="project" value="GO_Central"/>
</dbReference>
<dbReference type="GO" id="GO:0000978">
    <property type="term" value="F:RNA polymerase II cis-regulatory region sequence-specific DNA binding"/>
    <property type="evidence" value="ECO:0000314"/>
    <property type="project" value="PomBase"/>
</dbReference>
<dbReference type="GO" id="GO:0000977">
    <property type="term" value="F:RNA polymerase II transcription regulatory region sequence-specific DNA binding"/>
    <property type="evidence" value="ECO:0000314"/>
    <property type="project" value="PomBase"/>
</dbReference>
<dbReference type="GO" id="GO:0043565">
    <property type="term" value="F:sequence-specific DNA binding"/>
    <property type="evidence" value="ECO:0000314"/>
    <property type="project" value="PomBase"/>
</dbReference>
<dbReference type="GO" id="GO:0007155">
    <property type="term" value="P:cell adhesion"/>
    <property type="evidence" value="ECO:0007669"/>
    <property type="project" value="UniProtKB-KW"/>
</dbReference>
<dbReference type="GO" id="GO:0045944">
    <property type="term" value="P:positive regulation of transcription by RNA polymerase II"/>
    <property type="evidence" value="ECO:0000314"/>
    <property type="project" value="PomBase"/>
</dbReference>
<dbReference type="GO" id="GO:0019216">
    <property type="term" value="P:regulation of lipid metabolic process"/>
    <property type="evidence" value="ECO:0000315"/>
    <property type="project" value="PomBase"/>
</dbReference>
<dbReference type="FunFam" id="2.80.10.50:FF:000093">
    <property type="entry name" value="Unplaced genomic scaffold supercont1.1, whole genome shotgun sequence"/>
    <property type="match status" value="1"/>
</dbReference>
<dbReference type="Gene3D" id="2.80.10.50">
    <property type="match status" value="1"/>
</dbReference>
<dbReference type="Gene3D" id="2.60.40.1450">
    <property type="entry name" value="LAG1, DNA binding domain"/>
    <property type="match status" value="1"/>
</dbReference>
<dbReference type="InterPro" id="IPR015350">
    <property type="entry name" value="Beta-trefoil_DNA-bd_dom"/>
</dbReference>
<dbReference type="InterPro" id="IPR036358">
    <property type="entry name" value="BTD_sf"/>
</dbReference>
<dbReference type="InterPro" id="IPR040159">
    <property type="entry name" value="CLS_fam"/>
</dbReference>
<dbReference type="InterPro" id="IPR008967">
    <property type="entry name" value="p53-like_TF_DNA-bd_sf"/>
</dbReference>
<dbReference type="InterPro" id="IPR015351">
    <property type="entry name" value="RBP-J/Cbf11/Cbf12_DNA-bd"/>
</dbReference>
<dbReference type="InterPro" id="IPR037095">
    <property type="entry name" value="RBP-J/Cbf11_DNA-bd_sf"/>
</dbReference>
<dbReference type="PANTHER" id="PTHR10665">
    <property type="entry name" value="RECOMBINING BINDING PROTEIN SUPPRESSOR OF HAIRLESS"/>
    <property type="match status" value="1"/>
</dbReference>
<dbReference type="Pfam" id="PF09270">
    <property type="entry name" value="BTD"/>
    <property type="match status" value="1"/>
</dbReference>
<dbReference type="Pfam" id="PF09271">
    <property type="entry name" value="LAG1-DNAbind"/>
    <property type="match status" value="1"/>
</dbReference>
<dbReference type="SMART" id="SM01268">
    <property type="entry name" value="BTD"/>
    <property type="match status" value="1"/>
</dbReference>
<dbReference type="SMART" id="SM01267">
    <property type="entry name" value="LAG1_DNAbind"/>
    <property type="match status" value="1"/>
</dbReference>
<dbReference type="SUPFAM" id="SSF110217">
    <property type="entry name" value="DNA-binding protein LAG-1 (CSL)"/>
    <property type="match status" value="1"/>
</dbReference>
<dbReference type="SUPFAM" id="SSF49417">
    <property type="entry name" value="p53-like transcription factors"/>
    <property type="match status" value="1"/>
</dbReference>
<protein>
    <recommendedName>
        <fullName>Transcription factor cbf11</fullName>
    </recommendedName>
    <alternativeName>
        <fullName>C-promoter element-binding factor-like protein 11</fullName>
    </alternativeName>
</protein>
<comment type="function">
    <text evidence="2">Transcription factor that behaves as a negative regulator of adhesion. Recognizes specifically the canonical CSL response element GTGA/GGAA. May also play a cbf12-antagonistic role in the regulation of a number of other important processes such as extracellular material production, colony morphogenesis, ploidy maintenance, or meiosis.</text>
</comment>
<comment type="subcellular location">
    <subcellularLocation>
        <location>Cytoplasm</location>
    </subcellularLocation>
    <subcellularLocation>
        <location>Nucleus</location>
    </subcellularLocation>
</comment>
<comment type="induction">
    <text evidence="2">Expression is fairly constant throughout the growth phases of haploid cells and similar mRNA levels were found in vegetative diploid cells.</text>
</comment>
<comment type="disruption phenotype">
    <text evidence="2">Leads to cold sensitivity, slow growth, and altered colony morphology.</text>
</comment>
<comment type="similarity">
    <text evidence="3">Belongs to the Su(H) family.</text>
</comment>
<organism>
    <name type="scientific">Schizosaccharomyces pombe (strain 972 / ATCC 24843)</name>
    <name type="common">Fission yeast</name>
    <dbReference type="NCBI Taxonomy" id="284812"/>
    <lineage>
        <taxon>Eukaryota</taxon>
        <taxon>Fungi</taxon>
        <taxon>Dikarya</taxon>
        <taxon>Ascomycota</taxon>
        <taxon>Taphrinomycotina</taxon>
        <taxon>Schizosaccharomycetes</taxon>
        <taxon>Schizosaccharomycetales</taxon>
        <taxon>Schizosaccharomycetaceae</taxon>
        <taxon>Schizosaccharomyces</taxon>
    </lineage>
</organism>
<name>CBF11_SCHPO</name>
<reference key="1">
    <citation type="journal article" date="2002" name="Nature">
        <title>The genome sequence of Schizosaccharomyces pombe.</title>
        <authorList>
            <person name="Wood V."/>
            <person name="Gwilliam R."/>
            <person name="Rajandream M.A."/>
            <person name="Lyne M.H."/>
            <person name="Lyne R."/>
            <person name="Stewart A."/>
            <person name="Sgouros J.G."/>
            <person name="Peat N."/>
            <person name="Hayles J."/>
            <person name="Baker S.G."/>
            <person name="Basham D."/>
            <person name="Bowman S."/>
            <person name="Brooks K."/>
            <person name="Brown D."/>
            <person name="Brown S."/>
            <person name="Chillingworth T."/>
            <person name="Churcher C.M."/>
            <person name="Collins M."/>
            <person name="Connor R."/>
            <person name="Cronin A."/>
            <person name="Davis P."/>
            <person name="Feltwell T."/>
            <person name="Fraser A."/>
            <person name="Gentles S."/>
            <person name="Goble A."/>
            <person name="Hamlin N."/>
            <person name="Harris D.E."/>
            <person name="Hidalgo J."/>
            <person name="Hodgson G."/>
            <person name="Holroyd S."/>
            <person name="Hornsby T."/>
            <person name="Howarth S."/>
            <person name="Huckle E.J."/>
            <person name="Hunt S."/>
            <person name="Jagels K."/>
            <person name="James K.D."/>
            <person name="Jones L."/>
            <person name="Jones M."/>
            <person name="Leather S."/>
            <person name="McDonald S."/>
            <person name="McLean J."/>
            <person name="Mooney P."/>
            <person name="Moule S."/>
            <person name="Mungall K.L."/>
            <person name="Murphy L.D."/>
            <person name="Niblett D."/>
            <person name="Odell C."/>
            <person name="Oliver K."/>
            <person name="O'Neil S."/>
            <person name="Pearson D."/>
            <person name="Quail M.A."/>
            <person name="Rabbinowitsch E."/>
            <person name="Rutherford K.M."/>
            <person name="Rutter S."/>
            <person name="Saunders D."/>
            <person name="Seeger K."/>
            <person name="Sharp S."/>
            <person name="Skelton J."/>
            <person name="Simmonds M.N."/>
            <person name="Squares R."/>
            <person name="Squares S."/>
            <person name="Stevens K."/>
            <person name="Taylor K."/>
            <person name="Taylor R.G."/>
            <person name="Tivey A."/>
            <person name="Walsh S.V."/>
            <person name="Warren T."/>
            <person name="Whitehead S."/>
            <person name="Woodward J.R."/>
            <person name="Volckaert G."/>
            <person name="Aert R."/>
            <person name="Robben J."/>
            <person name="Grymonprez B."/>
            <person name="Weltjens I."/>
            <person name="Vanstreels E."/>
            <person name="Rieger M."/>
            <person name="Schaefer M."/>
            <person name="Mueller-Auer S."/>
            <person name="Gabel C."/>
            <person name="Fuchs M."/>
            <person name="Duesterhoeft A."/>
            <person name="Fritzc C."/>
            <person name="Holzer E."/>
            <person name="Moestl D."/>
            <person name="Hilbert H."/>
            <person name="Borzym K."/>
            <person name="Langer I."/>
            <person name="Beck A."/>
            <person name="Lehrach H."/>
            <person name="Reinhardt R."/>
            <person name="Pohl T.M."/>
            <person name="Eger P."/>
            <person name="Zimmermann W."/>
            <person name="Wedler H."/>
            <person name="Wambutt R."/>
            <person name="Purnelle B."/>
            <person name="Goffeau A."/>
            <person name="Cadieu E."/>
            <person name="Dreano S."/>
            <person name="Gloux S."/>
            <person name="Lelaure V."/>
            <person name="Mottier S."/>
            <person name="Galibert F."/>
            <person name="Aves S.J."/>
            <person name="Xiang Z."/>
            <person name="Hunt C."/>
            <person name="Moore K."/>
            <person name="Hurst S.M."/>
            <person name="Lucas M."/>
            <person name="Rochet M."/>
            <person name="Gaillardin C."/>
            <person name="Tallada V.A."/>
            <person name="Garzon A."/>
            <person name="Thode G."/>
            <person name="Daga R.R."/>
            <person name="Cruzado L."/>
            <person name="Jimenez J."/>
            <person name="Sanchez M."/>
            <person name="del Rey F."/>
            <person name="Benito J."/>
            <person name="Dominguez A."/>
            <person name="Revuelta J.L."/>
            <person name="Moreno S."/>
            <person name="Armstrong J."/>
            <person name="Forsburg S.L."/>
            <person name="Cerutti L."/>
            <person name="Lowe T."/>
            <person name="McCombie W.R."/>
            <person name="Paulsen I."/>
            <person name="Potashkin J."/>
            <person name="Shpakovski G.V."/>
            <person name="Ussery D."/>
            <person name="Barrell B.G."/>
            <person name="Nurse P."/>
        </authorList>
    </citation>
    <scope>NUCLEOTIDE SEQUENCE [LARGE SCALE GENOMIC DNA]</scope>
    <source>
        <strain>972 / ATCC 24843</strain>
    </source>
</reference>
<reference key="2">
    <citation type="journal article" date="2006" name="Nat. Biotechnol.">
        <title>ORFeome cloning and global analysis of protein localization in the fission yeast Schizosaccharomyces pombe.</title>
        <authorList>
            <person name="Matsuyama A."/>
            <person name="Arai R."/>
            <person name="Yashiroda Y."/>
            <person name="Shirai A."/>
            <person name="Kamata A."/>
            <person name="Sekido S."/>
            <person name="Kobayashi Y."/>
            <person name="Hashimoto A."/>
            <person name="Hamamoto M."/>
            <person name="Hiraoka Y."/>
            <person name="Horinouchi S."/>
            <person name="Yoshida M."/>
        </authorList>
    </citation>
    <scope>SUBCELLULAR LOCATION [LARGE SCALE ANALYSIS]</scope>
</reference>
<reference key="3">
    <citation type="journal article" date="2009" name="Exp. Cell Res.">
        <title>Cbf11 and Cbf12, the fission yeast CSL proteins, play opposing roles in cell adhesion and coordination of cell and nuclear division.</title>
        <authorList>
            <person name="Prevorovsky M."/>
            <person name="Grousl T."/>
            <person name="Stanurova J."/>
            <person name="Rynes J."/>
            <person name="Nellen W."/>
            <person name="Puta F."/>
            <person name="Folk P."/>
        </authorList>
    </citation>
    <scope>INDUCTION</scope>
    <scope>SUBCELLULAR LOCATION</scope>
    <scope>DNA-BINDING</scope>
    <scope>DISRUPTION PHENOTYPE</scope>
    <scope>FUNCTION</scope>
</reference>
<gene>
    <name type="primary">cbf11</name>
    <name type="ORF">SPCC736.08</name>
</gene>
<proteinExistence type="evidence at protein level"/>